<feature type="chain" id="PRO_0000146314" description="Small ribosomal subunit protein uS12">
    <location>
        <begin position="1"/>
        <end position="137"/>
    </location>
</feature>
<feature type="region of interest" description="Disordered" evidence="3">
    <location>
        <begin position="1"/>
        <end position="55"/>
    </location>
</feature>
<feature type="region of interest" description="Disordered" evidence="3">
    <location>
        <begin position="118"/>
        <end position="137"/>
    </location>
</feature>
<feature type="modified residue" description="3-methylthioaspartic acid" evidence="1">
    <location>
        <position position="102"/>
    </location>
</feature>
<evidence type="ECO:0000250" key="1"/>
<evidence type="ECO:0000255" key="2">
    <source>
        <dbReference type="HAMAP-Rule" id="MF_00403"/>
    </source>
</evidence>
<evidence type="ECO:0000256" key="3">
    <source>
        <dbReference type="SAM" id="MobiDB-lite"/>
    </source>
</evidence>
<evidence type="ECO:0000305" key="4"/>
<reference key="1">
    <citation type="journal article" date="2004" name="Proc. Natl. Acad. Sci. U.S.A.">
        <title>Complete genomes of two clinical Staphylococcus aureus strains: evidence for the rapid evolution of virulence and drug resistance.</title>
        <authorList>
            <person name="Holden M.T.G."/>
            <person name="Feil E.J."/>
            <person name="Lindsay J.A."/>
            <person name="Peacock S.J."/>
            <person name="Day N.P.J."/>
            <person name="Enright M.C."/>
            <person name="Foster T.J."/>
            <person name="Moore C.E."/>
            <person name="Hurst L."/>
            <person name="Atkin R."/>
            <person name="Barron A."/>
            <person name="Bason N."/>
            <person name="Bentley S.D."/>
            <person name="Chillingworth C."/>
            <person name="Chillingworth T."/>
            <person name="Churcher C."/>
            <person name="Clark L."/>
            <person name="Corton C."/>
            <person name="Cronin A."/>
            <person name="Doggett J."/>
            <person name="Dowd L."/>
            <person name="Feltwell T."/>
            <person name="Hance Z."/>
            <person name="Harris B."/>
            <person name="Hauser H."/>
            <person name="Holroyd S."/>
            <person name="Jagels K."/>
            <person name="James K.D."/>
            <person name="Lennard N."/>
            <person name="Line A."/>
            <person name="Mayes R."/>
            <person name="Moule S."/>
            <person name="Mungall K."/>
            <person name="Ormond D."/>
            <person name="Quail M.A."/>
            <person name="Rabbinowitsch E."/>
            <person name="Rutherford K.M."/>
            <person name="Sanders M."/>
            <person name="Sharp S."/>
            <person name="Simmonds M."/>
            <person name="Stevens K."/>
            <person name="Whitehead S."/>
            <person name="Barrell B.G."/>
            <person name="Spratt B.G."/>
            <person name="Parkhill J."/>
        </authorList>
    </citation>
    <scope>NUCLEOTIDE SEQUENCE [LARGE SCALE GENOMIC DNA]</scope>
    <source>
        <strain>MSSA476</strain>
    </source>
</reference>
<accession>Q6GBU2</accession>
<dbReference type="EMBL" id="BX571857">
    <property type="protein sequence ID" value="CAG42278.1"/>
    <property type="molecule type" value="Genomic_DNA"/>
</dbReference>
<dbReference type="RefSeq" id="WP_001142337.1">
    <property type="nucleotide sequence ID" value="NC_002953.3"/>
</dbReference>
<dbReference type="SMR" id="Q6GBU2"/>
<dbReference type="GeneID" id="98344879"/>
<dbReference type="KEGG" id="sas:SAS0503"/>
<dbReference type="HOGENOM" id="CLU_104295_1_2_9"/>
<dbReference type="GO" id="GO:0015935">
    <property type="term" value="C:small ribosomal subunit"/>
    <property type="evidence" value="ECO:0007669"/>
    <property type="project" value="InterPro"/>
</dbReference>
<dbReference type="GO" id="GO:0019843">
    <property type="term" value="F:rRNA binding"/>
    <property type="evidence" value="ECO:0007669"/>
    <property type="project" value="UniProtKB-UniRule"/>
</dbReference>
<dbReference type="GO" id="GO:0003735">
    <property type="term" value="F:structural constituent of ribosome"/>
    <property type="evidence" value="ECO:0007669"/>
    <property type="project" value="InterPro"/>
</dbReference>
<dbReference type="GO" id="GO:0000049">
    <property type="term" value="F:tRNA binding"/>
    <property type="evidence" value="ECO:0007669"/>
    <property type="project" value="UniProtKB-UniRule"/>
</dbReference>
<dbReference type="GO" id="GO:0006412">
    <property type="term" value="P:translation"/>
    <property type="evidence" value="ECO:0007669"/>
    <property type="project" value="UniProtKB-UniRule"/>
</dbReference>
<dbReference type="CDD" id="cd03368">
    <property type="entry name" value="Ribosomal_S12"/>
    <property type="match status" value="1"/>
</dbReference>
<dbReference type="FunFam" id="2.40.50.140:FF:000001">
    <property type="entry name" value="30S ribosomal protein S12"/>
    <property type="match status" value="1"/>
</dbReference>
<dbReference type="Gene3D" id="2.40.50.140">
    <property type="entry name" value="Nucleic acid-binding proteins"/>
    <property type="match status" value="1"/>
</dbReference>
<dbReference type="HAMAP" id="MF_00403_B">
    <property type="entry name" value="Ribosomal_uS12_B"/>
    <property type="match status" value="1"/>
</dbReference>
<dbReference type="InterPro" id="IPR012340">
    <property type="entry name" value="NA-bd_OB-fold"/>
</dbReference>
<dbReference type="InterPro" id="IPR006032">
    <property type="entry name" value="Ribosomal_uS12"/>
</dbReference>
<dbReference type="InterPro" id="IPR005679">
    <property type="entry name" value="Ribosomal_uS12_bac"/>
</dbReference>
<dbReference type="NCBIfam" id="TIGR00981">
    <property type="entry name" value="rpsL_bact"/>
    <property type="match status" value="1"/>
</dbReference>
<dbReference type="PANTHER" id="PTHR11652">
    <property type="entry name" value="30S RIBOSOMAL PROTEIN S12 FAMILY MEMBER"/>
    <property type="match status" value="1"/>
</dbReference>
<dbReference type="Pfam" id="PF00164">
    <property type="entry name" value="Ribosom_S12_S23"/>
    <property type="match status" value="1"/>
</dbReference>
<dbReference type="PIRSF" id="PIRSF002133">
    <property type="entry name" value="Ribosomal_S12/S23"/>
    <property type="match status" value="1"/>
</dbReference>
<dbReference type="PRINTS" id="PR01034">
    <property type="entry name" value="RIBOSOMALS12"/>
</dbReference>
<dbReference type="SUPFAM" id="SSF50249">
    <property type="entry name" value="Nucleic acid-binding proteins"/>
    <property type="match status" value="1"/>
</dbReference>
<dbReference type="PROSITE" id="PS00055">
    <property type="entry name" value="RIBOSOMAL_S12"/>
    <property type="match status" value="1"/>
</dbReference>
<comment type="function">
    <text evidence="2">With S4 and S5 plays an important role in translational accuracy.</text>
</comment>
<comment type="function">
    <text evidence="2">Interacts with and stabilizes bases of the 16S rRNA that are involved in tRNA selection in the A site and with the mRNA backbone. Located at the interface of the 30S and 50S subunits, it traverses the body of the 30S subunit contacting proteins on the other side and probably holding the rRNA structure together. The combined cluster of proteins S8, S12 and S17 appears to hold together the shoulder and platform of the 30S subunit.</text>
</comment>
<comment type="subunit">
    <text evidence="2">Part of the 30S ribosomal subunit. Contacts proteins S8 and S17. May interact with IF1 in the 30S initiation complex.</text>
</comment>
<comment type="similarity">
    <text evidence="2">Belongs to the universal ribosomal protein uS12 family.</text>
</comment>
<keyword id="KW-0488">Methylation</keyword>
<keyword id="KW-0687">Ribonucleoprotein</keyword>
<keyword id="KW-0689">Ribosomal protein</keyword>
<keyword id="KW-0694">RNA-binding</keyword>
<keyword id="KW-0699">rRNA-binding</keyword>
<keyword id="KW-0820">tRNA-binding</keyword>
<sequence>MPTINQLVRKPRQSKIKKSDSPALNKGFNSKKKKFTDLNSPQKRGVCTRVGTMTPKKPNSALRKYARVRLSNNIEINAYIPGIGHNLQEHSVVLVRGGRVKDLPGVRYHIVRGALDTSGVDGRRQGRSLYGTKKPKN</sequence>
<proteinExistence type="inferred from homology"/>
<gene>
    <name evidence="2" type="primary">rpsL</name>
    <name type="ordered locus">SAS0503</name>
</gene>
<organism>
    <name type="scientific">Staphylococcus aureus (strain MSSA476)</name>
    <dbReference type="NCBI Taxonomy" id="282459"/>
    <lineage>
        <taxon>Bacteria</taxon>
        <taxon>Bacillati</taxon>
        <taxon>Bacillota</taxon>
        <taxon>Bacilli</taxon>
        <taxon>Bacillales</taxon>
        <taxon>Staphylococcaceae</taxon>
        <taxon>Staphylococcus</taxon>
    </lineage>
</organism>
<name>RS12_STAAS</name>
<protein>
    <recommendedName>
        <fullName evidence="2">Small ribosomal subunit protein uS12</fullName>
    </recommendedName>
    <alternativeName>
        <fullName evidence="4">30S ribosomal protein S12</fullName>
    </alternativeName>
</protein>